<reference key="1">
    <citation type="journal article" date="2018" name="J. Am. Chem. Soc.">
        <title>Genome mining and assembly-line biosynthesis of the UCS1025A pyrrolizidinone family of fungal alkaloids.</title>
        <authorList>
            <person name="Li L."/>
            <person name="Tang M.C."/>
            <person name="Tang S."/>
            <person name="Gao S."/>
            <person name="Soliman S."/>
            <person name="Hang L."/>
            <person name="Xu W."/>
            <person name="Ye T."/>
            <person name="Watanabe K."/>
            <person name="Tang Y."/>
        </authorList>
    </citation>
    <scope>NUCLEOTIDE SEQUENCE [GENOMIC DNA]</scope>
    <scope>FUNCTION</scope>
    <scope>DISRUPTION PHENOTYPE</scope>
    <scope>PATHWAY</scope>
    <source>
        <strain>KY4917</strain>
    </source>
</reference>
<feature type="chain" id="PRO_0000450538" description="Diels-Alderase ucsH">
    <location>
        <begin position="1"/>
        <end position="409"/>
    </location>
</feature>
<feature type="transmembrane region" description="Helical" evidence="1">
    <location>
        <begin position="386"/>
        <end position="406"/>
    </location>
</feature>
<name>UCSH_ACRSP</name>
<protein>
    <recommendedName>
        <fullName evidence="3">Diels-Alderase ucsH</fullName>
        <ecNumber evidence="2">5.5.1.-</ecNumber>
    </recommendedName>
    <alternativeName>
        <fullName evidence="3">UCS1025A pyrrolizidinone biosynthesis cluster protein H</fullName>
    </alternativeName>
</protein>
<evidence type="ECO:0000255" key="1"/>
<evidence type="ECO:0000269" key="2">
    <source>
    </source>
</evidence>
<evidence type="ECO:0000303" key="3">
    <source>
    </source>
</evidence>
<evidence type="ECO:0000305" key="4"/>
<evidence type="ECO:0000305" key="5">
    <source>
    </source>
</evidence>
<gene>
    <name evidence="3" type="primary">ucsH</name>
</gene>
<keyword id="KW-0413">Isomerase</keyword>
<keyword id="KW-0472">Membrane</keyword>
<keyword id="KW-0812">Transmembrane</keyword>
<keyword id="KW-1133">Transmembrane helix</keyword>
<sequence length="409" mass="44901">MARINRQTAYQKAQEIEFSTSSADPLAAWRISGIKGTAWEQWYFDSIADDGKSGIVLTMARDASYTVLGRGVLRVELDVTFEDGSHHNHVDWMNEAIVEDRSSPKSTGTIDGVWTAPGKSIRFQIAADGSAAKVEVDTPETKGHFTLAALSPPMYPNGETQNELESQGKVASTELLPKIHLVQVIPTATFEGDLMVNGRLLRFRGIGGHMHAWAQGAWFDTTLGWKVARGVAGPFSVTLMEYTDMEGIVHSSGYVVEDGVKRFGGLETYATPRSSATSQQVLKYRDEDRKGKQTVRWTPTYNTGFAGRFGDSSTGAILQFSSADSGETYRFELTHRRKAFEFLFGSSDSGLTAFLGEIKGGKIGSEVYEGVQASNVCVLPQGWTKIYFFICMLLAVVTFGYINILETNT</sequence>
<accession>A0A411KUQ1</accession>
<proteinExistence type="inferred from homology"/>
<comment type="function">
    <text evidence="2 5">Diels-Alderase; part of the gene cluster that mediates the biosynthesis of UCS1025A, a member of the pyrrolizidinone family that acts as a strong telomerase inhibitor and displays potent antibacterial and antitumor properties (PubMed:29373009). These compounds share a hemiaminal-containing pyrrolizidinone core fused with a gamma-lactone, giving a furopyrrolizidine that is connected to a decalin fragment (PubMed:29373009). The polyketide synthase module (PKS) of the PKS-NRPS ucsA is responsible for the synthesis of the polyketide backbone via the condensation of an acetyl-CoA starter unit with 6 malonyl-CoA units (PubMed:29373009). The downstream nonribosomal peptide synthetase (NRPS) module then amidates the carboxyl end of the polyketide with a 2S,3S-methylproline derived from L-isoleucine by the 2-oxoglutarate-dependent dioxygenase ucsF which converts L-isoleucine to (4S,5S)-4-methylpyrroline-5-carboxylate that is further converted to 2S,3S-methylproline by the pyrroline-5-carboxylate reductase ucsG (PubMed:29373009). Reductive release of the completed aminoacyl polyketide from the assembly line can form the 3-pyrrolin-2-one structure via an intramolecular Knoevenagel reaction (PubMed:29373009). Because ucsA lacks a designated enoylreductase (ER) domain, the required activity is provided the enoyl reductase ucsL (PubMed:29373009). This keto acyclic precursor is the substrate of the Diels-Alderase ucsH, that catalyzes the Diels-Alder cycloaddition (PubMed:29373009). Oxidation of the 3S-methyl group to a carboxylate by the cytochrome P450 monooxygenase ucsK allows an oxa-Michael cyclization that might involve the reductase/dehydrogenase ucsI and which furnishes the furopyrrolizidine (PubMed:29373009). The oxidase ucsJ likely plays a critical role in stereoselective reduction of the C5-C6 double bond to afford the required R-configured carboxylate group (Probable). Further enolization and oxidation at C5 by an unidentified enzyme affords the last intermediate that can undergo oxa-Michael cyclization to yield UCS1025A (Probable).</text>
</comment>
<comment type="pathway">
    <text evidence="2">Mycotoxin biosynthesis.</text>
</comment>
<comment type="subcellular location">
    <subcellularLocation>
        <location evidence="1">Membrane</location>
        <topology evidence="1">Single-pass membrane protein</topology>
    </subcellularLocation>
</comment>
<comment type="disruption phenotype">
    <text evidence="2">Abolishes the production of UCS1025A.</text>
</comment>
<comment type="similarity">
    <text evidence="4">Belongs to the Diels-Alderase family.</text>
</comment>
<organism>
    <name type="scientific">Acremonium sp</name>
    <dbReference type="NCBI Taxonomy" id="2046025"/>
    <lineage>
        <taxon>Eukaryota</taxon>
        <taxon>Fungi</taxon>
        <taxon>Dikarya</taxon>
        <taxon>Ascomycota</taxon>
        <taxon>Pezizomycotina</taxon>
        <taxon>Sordariomycetes</taxon>
        <taxon>Hypocreomycetidae</taxon>
        <taxon>Hypocreales</taxon>
        <taxon>Hypocreales incertae sedis</taxon>
        <taxon>Acremonium</taxon>
    </lineage>
</organism>
<dbReference type="EC" id="5.5.1.-" evidence="2"/>
<dbReference type="EMBL" id="MH375771">
    <property type="protein sequence ID" value="QBC88152.1"/>
    <property type="molecule type" value="Genomic_DNA"/>
</dbReference>
<dbReference type="SMR" id="A0A411KUQ1"/>
<dbReference type="GO" id="GO:0016020">
    <property type="term" value="C:membrane"/>
    <property type="evidence" value="ECO:0007669"/>
    <property type="project" value="UniProtKB-SubCell"/>
</dbReference>
<dbReference type="GO" id="GO:0016853">
    <property type="term" value="F:isomerase activity"/>
    <property type="evidence" value="ECO:0007669"/>
    <property type="project" value="UniProtKB-KW"/>
</dbReference>
<dbReference type="InterPro" id="IPR054499">
    <property type="entry name" value="DA_C"/>
</dbReference>
<dbReference type="Pfam" id="PF22903">
    <property type="entry name" value="DA_C"/>
    <property type="match status" value="1"/>
</dbReference>
<dbReference type="Pfam" id="PF24137">
    <property type="entry name" value="DA_N"/>
    <property type="match status" value="1"/>
</dbReference>
<dbReference type="SUPFAM" id="SSF159245">
    <property type="entry name" value="AttH-like"/>
    <property type="match status" value="1"/>
</dbReference>